<comment type="function">
    <text>Catalyzes the oxidation of 3-carboxy-2-hydroxy-4-methylpentanoate (3-isopropylmalate) to 3-carboxy-4-methyl-2-oxopentanoate. The product decarboxylates to 4-methyl-2 oxopentanoate.</text>
</comment>
<comment type="catalytic activity">
    <reaction>
        <text>(2R,3S)-3-isopropylmalate + NAD(+) = 4-methyl-2-oxopentanoate + CO2 + NADH</text>
        <dbReference type="Rhea" id="RHEA:32271"/>
        <dbReference type="ChEBI" id="CHEBI:16526"/>
        <dbReference type="ChEBI" id="CHEBI:17865"/>
        <dbReference type="ChEBI" id="CHEBI:35121"/>
        <dbReference type="ChEBI" id="CHEBI:57540"/>
        <dbReference type="ChEBI" id="CHEBI:57945"/>
        <dbReference type="EC" id="1.1.1.85"/>
    </reaction>
</comment>
<comment type="cofactor">
    <cofactor evidence="1">
        <name>Mg(2+)</name>
        <dbReference type="ChEBI" id="CHEBI:18420"/>
    </cofactor>
    <cofactor evidence="1">
        <name>Mn(2+)</name>
        <dbReference type="ChEBI" id="CHEBI:29035"/>
    </cofactor>
    <text evidence="1">Binds 1 Mg(2+) or Mn(2+) ion per subunit.</text>
</comment>
<comment type="pathway">
    <text>Amino-acid biosynthesis; L-leucine biosynthesis; L-leucine from 3-methyl-2-oxobutanoate: step 3/4.</text>
</comment>
<comment type="subunit">
    <text evidence="1">Homodimer.</text>
</comment>
<comment type="subcellular location">
    <subcellularLocation>
        <location>Cytoplasm</location>
    </subcellularLocation>
</comment>
<comment type="similarity">
    <text evidence="2">Belongs to the isocitrate and isopropylmalate dehydrogenases family.</text>
</comment>
<name>LEU3B_ASPNG</name>
<protein>
    <recommendedName>
        <fullName>3-isopropylmalate dehydrogenase B</fullName>
        <shortName>3-IPM-DH B</shortName>
        <shortName>IMDH B</shortName>
        <ecNumber>1.1.1.85</ecNumber>
    </recommendedName>
    <alternativeName>
        <fullName>Beta-IPM dehydrogenase B</fullName>
    </alternativeName>
</protein>
<proteinExistence type="evidence at transcript level"/>
<dbReference type="EC" id="1.1.1.85"/>
<dbReference type="EMBL" id="S83229">
    <property type="protein sequence ID" value="AAB50828.1"/>
    <property type="molecule type" value="mRNA"/>
</dbReference>
<dbReference type="EMBL" id="U51131">
    <property type="protein sequence ID" value="AAD10279.1"/>
    <property type="molecule type" value="mRNA"/>
</dbReference>
<dbReference type="PIR" id="S72210">
    <property type="entry name" value="S72210"/>
</dbReference>
<dbReference type="SMR" id="P87257"/>
<dbReference type="PaxDb" id="5061-CADANGAP00004627"/>
<dbReference type="VEuPathDB" id="FungiDB:An04g10130"/>
<dbReference type="VEuPathDB" id="FungiDB:ASPNIDRAFT2_1223020"/>
<dbReference type="VEuPathDB" id="FungiDB:ATCC64974_86770"/>
<dbReference type="VEuPathDB" id="FungiDB:M747DRAFT_326113"/>
<dbReference type="eggNOG" id="KOG0786">
    <property type="taxonomic scope" value="Eukaryota"/>
</dbReference>
<dbReference type="UniPathway" id="UPA00048">
    <property type="reaction ID" value="UER00072"/>
</dbReference>
<dbReference type="GO" id="GO:0005829">
    <property type="term" value="C:cytosol"/>
    <property type="evidence" value="ECO:0007669"/>
    <property type="project" value="TreeGrafter"/>
</dbReference>
<dbReference type="GO" id="GO:0003862">
    <property type="term" value="F:3-isopropylmalate dehydrogenase activity"/>
    <property type="evidence" value="ECO:0007669"/>
    <property type="project" value="UniProtKB-EC"/>
</dbReference>
<dbReference type="GO" id="GO:0000287">
    <property type="term" value="F:magnesium ion binding"/>
    <property type="evidence" value="ECO:0007669"/>
    <property type="project" value="InterPro"/>
</dbReference>
<dbReference type="GO" id="GO:0051287">
    <property type="term" value="F:NAD binding"/>
    <property type="evidence" value="ECO:0007669"/>
    <property type="project" value="InterPro"/>
</dbReference>
<dbReference type="GO" id="GO:0009098">
    <property type="term" value="P:L-leucine biosynthetic process"/>
    <property type="evidence" value="ECO:0007669"/>
    <property type="project" value="UniProtKB-UniPathway"/>
</dbReference>
<dbReference type="FunFam" id="3.40.718.10:FF:000006">
    <property type="entry name" value="3-isopropylmalate dehydrogenase"/>
    <property type="match status" value="1"/>
</dbReference>
<dbReference type="Gene3D" id="3.40.718.10">
    <property type="entry name" value="Isopropylmalate Dehydrogenase"/>
    <property type="match status" value="1"/>
</dbReference>
<dbReference type="InterPro" id="IPR019818">
    <property type="entry name" value="IsoCit/isopropylmalate_DH_CS"/>
</dbReference>
<dbReference type="InterPro" id="IPR024084">
    <property type="entry name" value="IsoPropMal-DH-like_dom"/>
</dbReference>
<dbReference type="InterPro" id="IPR004429">
    <property type="entry name" value="Isopropylmalate_DH"/>
</dbReference>
<dbReference type="NCBIfam" id="TIGR00169">
    <property type="entry name" value="leuB"/>
    <property type="match status" value="1"/>
</dbReference>
<dbReference type="PANTHER" id="PTHR42979">
    <property type="entry name" value="3-ISOPROPYLMALATE DEHYDROGENASE"/>
    <property type="match status" value="1"/>
</dbReference>
<dbReference type="PANTHER" id="PTHR42979:SF4">
    <property type="entry name" value="3-ISOPROPYLMALATE DEHYDROGENASE"/>
    <property type="match status" value="1"/>
</dbReference>
<dbReference type="Pfam" id="PF00180">
    <property type="entry name" value="Iso_dh"/>
    <property type="match status" value="1"/>
</dbReference>
<dbReference type="SMART" id="SM01329">
    <property type="entry name" value="Iso_dh"/>
    <property type="match status" value="1"/>
</dbReference>
<dbReference type="SUPFAM" id="SSF53659">
    <property type="entry name" value="Isocitrate/Isopropylmalate dehydrogenase-like"/>
    <property type="match status" value="1"/>
</dbReference>
<dbReference type="PROSITE" id="PS00470">
    <property type="entry name" value="IDH_IMDH"/>
    <property type="match status" value="1"/>
</dbReference>
<feature type="chain" id="PRO_0000083600" description="3-isopropylmalate dehydrogenase B">
    <location>
        <begin position="1"/>
        <end position="371"/>
    </location>
</feature>
<feature type="binding site" evidence="1">
    <location>
        <begin position="79"/>
        <end position="93"/>
    </location>
    <ligand>
        <name>NAD(+)</name>
        <dbReference type="ChEBI" id="CHEBI:57540"/>
    </ligand>
</feature>
<feature type="binding site" evidence="1">
    <location>
        <position position="100"/>
    </location>
    <ligand>
        <name>substrate</name>
    </ligand>
</feature>
<feature type="binding site" evidence="1">
    <location>
        <position position="110"/>
    </location>
    <ligand>
        <name>substrate</name>
    </ligand>
</feature>
<feature type="binding site" evidence="1">
    <location>
        <position position="142"/>
    </location>
    <ligand>
        <name>substrate</name>
    </ligand>
</feature>
<feature type="binding site" evidence="1">
    <location>
        <position position="229"/>
    </location>
    <ligand>
        <name>Mg(2+)</name>
        <dbReference type="ChEBI" id="CHEBI:18420"/>
    </ligand>
</feature>
<feature type="binding site" evidence="1">
    <location>
        <position position="229"/>
    </location>
    <ligand>
        <name>substrate</name>
    </ligand>
</feature>
<feature type="binding site" evidence="1">
    <location>
        <position position="254"/>
    </location>
    <ligand>
        <name>Mg(2+)</name>
        <dbReference type="ChEBI" id="CHEBI:18420"/>
    </ligand>
</feature>
<feature type="binding site" evidence="1">
    <location>
        <position position="258"/>
    </location>
    <ligand>
        <name>Mg(2+)</name>
        <dbReference type="ChEBI" id="CHEBI:18420"/>
    </ligand>
</feature>
<feature type="binding site" evidence="1">
    <location>
        <begin position="296"/>
        <end position="308"/>
    </location>
    <ligand>
        <name>NAD(+)</name>
        <dbReference type="ChEBI" id="CHEBI:57540"/>
    </ligand>
</feature>
<feature type="site" description="Important for catalysis" evidence="1">
    <location>
        <position position="149"/>
    </location>
</feature>
<feature type="site" description="Important for catalysis" evidence="1">
    <location>
        <position position="196"/>
    </location>
</feature>
<organism>
    <name type="scientific">Aspergillus niger</name>
    <dbReference type="NCBI Taxonomy" id="5061"/>
    <lineage>
        <taxon>Eukaryota</taxon>
        <taxon>Fungi</taxon>
        <taxon>Dikarya</taxon>
        <taxon>Ascomycota</taxon>
        <taxon>Pezizomycotina</taxon>
        <taxon>Eurotiomycetes</taxon>
        <taxon>Eurotiomycetidae</taxon>
        <taxon>Eurotiales</taxon>
        <taxon>Aspergillaceae</taxon>
        <taxon>Aspergillus</taxon>
        <taxon>Aspergillus subgen. Circumdati</taxon>
    </lineage>
</organism>
<evidence type="ECO:0000250" key="1"/>
<evidence type="ECO:0000305" key="2"/>
<reference key="1">
    <citation type="journal article" date="1996" name="Curr. Genet.">
        <title>Isolation by genetic complementation of two differentially expressed genes for beta-isopropylmalate dehydrogenase from Aspergillus niger.</title>
        <authorList>
            <person name="Williams B.A."/>
            <person name="Sillaots S."/>
            <person name="Tsang A."/>
            <person name="Storms R."/>
        </authorList>
    </citation>
    <scope>NUCLEOTIDE SEQUENCE [MRNA]</scope>
    <source>
        <strain>A733</strain>
    </source>
</reference>
<gene>
    <name type="primary">leu2B</name>
</gene>
<sequence length="371" mass="40126">MSGTRAYNILVLPGDGIGPEVMAEAIKVLRTFNSSSMQFHLQEELIGGISIDTHGHSVTQPVKDAAVAADAVLFAAVGGSKVDHIRRGLDGPEGGLLQVRKAMDIYANLRPCSVDVPSREIARDFSPFRQEVIEGVDFVVVRENCGGAYFGKKVEEENYAMDEWGYSTTEIQRIARLAAELALRHDPPWPVISLDKANVLASSRLWRRVVENTISVEYPQVKLVHQLADSASLIMATDPRVLNGVILADNTFGDMLSDQAGSLIGTLGVLPSASLDGLPHPGKQEKVRGLYEPTHGSAPTIAGKNIANPTAMILCVSLMFRYSFNMENEARQIEDAVRAVLDRGLRTPDLGGNSSTQEFGDAVVAALQGKY</sequence>
<keyword id="KW-0028">Amino-acid biosynthesis</keyword>
<keyword id="KW-0100">Branched-chain amino acid biosynthesis</keyword>
<keyword id="KW-0963">Cytoplasm</keyword>
<keyword id="KW-0432">Leucine biosynthesis</keyword>
<keyword id="KW-0460">Magnesium</keyword>
<keyword id="KW-0464">Manganese</keyword>
<keyword id="KW-0479">Metal-binding</keyword>
<keyword id="KW-0520">NAD</keyword>
<keyword id="KW-0560">Oxidoreductase</keyword>
<accession>P87257</accession>